<proteinExistence type="evidence at protein level"/>
<evidence type="ECO:0000250" key="1">
    <source>
        <dbReference type="UniProtKB" id="Q59771"/>
    </source>
</evidence>
<evidence type="ECO:0000255" key="2">
    <source>
        <dbReference type="PROSITE-ProRule" id="PRU10011"/>
    </source>
</evidence>
<evidence type="ECO:0000269" key="3">
    <source>
    </source>
</evidence>
<evidence type="ECO:0000303" key="4">
    <source>
    </source>
</evidence>
<evidence type="ECO:0000305" key="5"/>
<evidence type="ECO:0000305" key="6">
    <source>
    </source>
</evidence>
<comment type="function">
    <text evidence="3">Catalyzes the reversible NAD(+)-dependent oxidative deamination of L-phenylalanine to phenylpyruvate.</text>
</comment>
<comment type="catalytic activity">
    <reaction evidence="3">
        <text>L-phenylalanine + NAD(+) + H2O = 3-phenylpyruvate + NH4(+) + NADH + H(+)</text>
        <dbReference type="Rhea" id="RHEA:21408"/>
        <dbReference type="ChEBI" id="CHEBI:15377"/>
        <dbReference type="ChEBI" id="CHEBI:15378"/>
        <dbReference type="ChEBI" id="CHEBI:18005"/>
        <dbReference type="ChEBI" id="CHEBI:28938"/>
        <dbReference type="ChEBI" id="CHEBI:57540"/>
        <dbReference type="ChEBI" id="CHEBI:57945"/>
        <dbReference type="ChEBI" id="CHEBI:58095"/>
        <dbReference type="EC" id="1.4.1.20"/>
    </reaction>
</comment>
<comment type="biophysicochemical properties">
    <temperatureDependence>
        <text evidence="6">Thermostable.</text>
    </temperatureDependence>
</comment>
<comment type="pathway">
    <text evidence="3">Amino-acid biosynthesis; L-phenylalanine biosynthesis; L-phenylalanine from phenylpyruvate (PDH route): step 1/1.</text>
</comment>
<comment type="similarity">
    <text evidence="5">Belongs to the Glu/Leu/Phe/Val dehydrogenases family.</text>
</comment>
<feature type="chain" id="PRO_0000182809" description="Phenylalanine dehydrogenase">
    <location>
        <begin position="1"/>
        <end position="366"/>
    </location>
</feature>
<feature type="active site" evidence="1 2">
    <location>
        <position position="81"/>
    </location>
</feature>
<feature type="binding site" evidence="1">
    <location>
        <position position="45"/>
    </location>
    <ligand>
        <name>NAD(+)</name>
        <dbReference type="ChEBI" id="CHEBI:57540"/>
    </ligand>
</feature>
<feature type="binding site" evidence="1">
    <location>
        <position position="69"/>
    </location>
    <ligand>
        <name>L-phenylalanine</name>
        <dbReference type="ChEBI" id="CHEBI:58095"/>
    </ligand>
</feature>
<feature type="binding site" evidence="1">
    <location>
        <position position="116"/>
    </location>
    <ligand>
        <name>NAD(+)</name>
        <dbReference type="ChEBI" id="CHEBI:57540"/>
    </ligand>
</feature>
<feature type="binding site" evidence="1">
    <location>
        <position position="151"/>
    </location>
    <ligand>
        <name>NAD(+)</name>
        <dbReference type="ChEBI" id="CHEBI:57540"/>
    </ligand>
</feature>
<feature type="binding site" evidence="1">
    <location>
        <begin position="181"/>
        <end position="187"/>
    </location>
    <ligand>
        <name>NAD(+)</name>
        <dbReference type="ChEBI" id="CHEBI:57540"/>
    </ligand>
</feature>
<feature type="binding site" evidence="1">
    <location>
        <begin position="204"/>
        <end position="205"/>
    </location>
    <ligand>
        <name>NAD(+)</name>
        <dbReference type="ChEBI" id="CHEBI:57540"/>
    </ligand>
</feature>
<feature type="binding site" evidence="1">
    <location>
        <begin position="241"/>
        <end position="242"/>
    </location>
    <ligand>
        <name>NAD(+)</name>
        <dbReference type="ChEBI" id="CHEBI:57540"/>
    </ligand>
</feature>
<feature type="binding site" evidence="1">
    <location>
        <begin position="262"/>
        <end position="264"/>
    </location>
    <ligand>
        <name>NAD(+)</name>
        <dbReference type="ChEBI" id="CHEBI:57540"/>
    </ligand>
</feature>
<feature type="binding site" evidence="1">
    <location>
        <position position="264"/>
    </location>
    <ligand>
        <name>L-phenylalanine</name>
        <dbReference type="ChEBI" id="CHEBI:58095"/>
    </ligand>
</feature>
<organism>
    <name type="scientific">Thermoactinomyces intermedius</name>
    <dbReference type="NCBI Taxonomy" id="2024"/>
    <lineage>
        <taxon>Bacteria</taxon>
        <taxon>Bacillati</taxon>
        <taxon>Bacillota</taxon>
        <taxon>Bacilli</taxon>
        <taxon>Bacillales</taxon>
        <taxon>Thermoactinomycetaceae</taxon>
        <taxon>Thermoactinomyces</taxon>
    </lineage>
</organism>
<sequence length="366" mass="40488">MRDVFEMMDRYGHEQVIFCRHPQTGLKAIIALHNTTAGPALGGCRMIPYASTDEALEDVLRLSKGMTYKCSLADVDFGGGKMVIIGDPKKDKSPELFRVIGRFVGGLNGRFYTGTDMGTNPEDFVHAARESKSFAGLPKSYGGKGDTSIPTALGVFHGMRATARFLWGTDQLKGRVVAIQGVGKVGERLLQLLVEVGAYCKIADIDSVRCEQLKEKYGDKVQLVDVNRIHKESCDIFSPCAKGGVVNDDTIDEFRCLAIVGSANNQLVEDRHGALLQKRSICYAPDYLVNAGGLIQVADELEGFHEERVLAKTEAIYDMVLDIFHRAKNENITTCEAADRIVMERLKKLTDIRRILLEDPRNSARR</sequence>
<keyword id="KW-0903">Direct protein sequencing</keyword>
<keyword id="KW-0520">NAD</keyword>
<keyword id="KW-0560">Oxidoreductase</keyword>
<protein>
    <recommendedName>
        <fullName evidence="4">Phenylalanine dehydrogenase</fullName>
        <shortName evidence="4">PheDH</shortName>
        <ecNumber evidence="3">1.4.1.20</ecNumber>
    </recommendedName>
</protein>
<gene>
    <name evidence="4" type="primary">pdh</name>
</gene>
<reference key="1">
    <citation type="journal article" date="1991" name="J. Biochem.">
        <title>Thermostable phenylalanine dehydrogenase of Thermoactinomyces intermedius: cloning, expression, and sequencing of its gene.</title>
        <authorList>
            <person name="Takada H."/>
            <person name="Yoshimura T."/>
            <person name="Ohshima T."/>
            <person name="Esaki N."/>
            <person name="Soda K."/>
        </authorList>
    </citation>
    <scope>NUCLEOTIDE SEQUENCE [GENOMIC DNA]</scope>
    <scope>PROTEIN SEQUENCE OF 1-16</scope>
    <scope>PATHWAY</scope>
    <scope>CATALYTIC ACTIVITY</scope>
    <scope>BIOPHYSICOCHEMICAL PROPERTIES</scope>
    <scope>FUNCTION</scope>
    <source>
        <strain>ATCC 33205 / DSM 43846 / JCM 3312 / KCTC 9646 / NBRC 14230 / NRRL B-16979 / VKM Ac-1427 / T-323</strain>
    </source>
</reference>
<dbReference type="EC" id="1.4.1.20" evidence="3"/>
<dbReference type="EMBL" id="D00631">
    <property type="protein sequence ID" value="BAA00524.1"/>
    <property type="molecule type" value="Genomic_DNA"/>
</dbReference>
<dbReference type="PIR" id="JQ0513">
    <property type="entry name" value="JQ0513"/>
</dbReference>
<dbReference type="SMR" id="P22823"/>
<dbReference type="BRENDA" id="1.4.1.20">
    <property type="organism ID" value="6278"/>
</dbReference>
<dbReference type="SABIO-RK" id="P22823"/>
<dbReference type="UniPathway" id="UPA00121">
    <property type="reaction ID" value="UER00346"/>
</dbReference>
<dbReference type="GO" id="GO:0050175">
    <property type="term" value="F:phenylalanine dehydrogenase activity"/>
    <property type="evidence" value="ECO:0007669"/>
    <property type="project" value="UniProtKB-EC"/>
</dbReference>
<dbReference type="GO" id="GO:0009094">
    <property type="term" value="P:L-phenylalanine biosynthetic process"/>
    <property type="evidence" value="ECO:0007669"/>
    <property type="project" value="UniProtKB-UniPathway"/>
</dbReference>
<dbReference type="CDD" id="cd01075">
    <property type="entry name" value="NAD_bind_Leu_Phe_Val_DH"/>
    <property type="match status" value="1"/>
</dbReference>
<dbReference type="FunFam" id="3.40.50.10860:FF:000010">
    <property type="entry name" value="Leucine dehydrogenase"/>
    <property type="match status" value="1"/>
</dbReference>
<dbReference type="Gene3D" id="3.40.50.10860">
    <property type="entry name" value="Leucine Dehydrogenase, chain A, domain 1"/>
    <property type="match status" value="1"/>
</dbReference>
<dbReference type="Gene3D" id="3.40.50.720">
    <property type="entry name" value="NAD(P)-binding Rossmann-like Domain"/>
    <property type="match status" value="1"/>
</dbReference>
<dbReference type="InterPro" id="IPR046346">
    <property type="entry name" value="Aminoacid_DH-like_N_sf"/>
</dbReference>
<dbReference type="InterPro" id="IPR006095">
    <property type="entry name" value="Glu/Leu/Phe/Val/Trp_DH"/>
</dbReference>
<dbReference type="InterPro" id="IPR006096">
    <property type="entry name" value="Glu/Leu/Phe/Val/Trp_DH_C"/>
</dbReference>
<dbReference type="InterPro" id="IPR006097">
    <property type="entry name" value="Glu/Leu/Phe/Val/Trp_DH_dimer"/>
</dbReference>
<dbReference type="InterPro" id="IPR033524">
    <property type="entry name" value="Glu/Leu/Phe/Val_DH_AS"/>
</dbReference>
<dbReference type="InterPro" id="IPR016211">
    <property type="entry name" value="Glu/Phe/Leu/Val/Trp_DH_bac/arc"/>
</dbReference>
<dbReference type="InterPro" id="IPR036291">
    <property type="entry name" value="NAD(P)-bd_dom_sf"/>
</dbReference>
<dbReference type="PANTHER" id="PTHR42722">
    <property type="entry name" value="LEUCINE DEHYDROGENASE"/>
    <property type="match status" value="1"/>
</dbReference>
<dbReference type="PANTHER" id="PTHR42722:SF1">
    <property type="entry name" value="VALINE DEHYDROGENASE"/>
    <property type="match status" value="1"/>
</dbReference>
<dbReference type="Pfam" id="PF00208">
    <property type="entry name" value="ELFV_dehydrog"/>
    <property type="match status" value="1"/>
</dbReference>
<dbReference type="Pfam" id="PF02812">
    <property type="entry name" value="ELFV_dehydrog_N"/>
    <property type="match status" value="1"/>
</dbReference>
<dbReference type="PIRSF" id="PIRSF000188">
    <property type="entry name" value="Phe_leu_dh"/>
    <property type="match status" value="1"/>
</dbReference>
<dbReference type="PRINTS" id="PR00082">
    <property type="entry name" value="GLFDHDRGNASE"/>
</dbReference>
<dbReference type="SMART" id="SM00839">
    <property type="entry name" value="ELFV_dehydrog"/>
    <property type="match status" value="1"/>
</dbReference>
<dbReference type="SUPFAM" id="SSF53223">
    <property type="entry name" value="Aminoacid dehydrogenase-like, N-terminal domain"/>
    <property type="match status" value="1"/>
</dbReference>
<dbReference type="SUPFAM" id="SSF51735">
    <property type="entry name" value="NAD(P)-binding Rossmann-fold domains"/>
    <property type="match status" value="1"/>
</dbReference>
<dbReference type="PROSITE" id="PS00074">
    <property type="entry name" value="GLFV_DEHYDROGENASE"/>
    <property type="match status" value="1"/>
</dbReference>
<accession>P22823</accession>
<name>DHPH_THEIN</name>